<gene>
    <name evidence="1" type="primary">nhaA</name>
    <name type="ordered locus">DSY2267</name>
</gene>
<proteinExistence type="inferred from homology"/>
<evidence type="ECO:0000255" key="1">
    <source>
        <dbReference type="HAMAP-Rule" id="MF_01844"/>
    </source>
</evidence>
<feature type="chain" id="PRO_0000334275" description="Na(+)/H(+) antiporter NhaA">
    <location>
        <begin position="1"/>
        <end position="389"/>
    </location>
</feature>
<feature type="transmembrane region" description="Helical" evidence="1">
    <location>
        <begin position="8"/>
        <end position="28"/>
    </location>
</feature>
<feature type="transmembrane region" description="Helical" evidence="1">
    <location>
        <begin position="48"/>
        <end position="68"/>
    </location>
</feature>
<feature type="transmembrane region" description="Helical" evidence="1">
    <location>
        <begin position="91"/>
        <end position="111"/>
    </location>
</feature>
<feature type="transmembrane region" description="Helical" evidence="1">
    <location>
        <begin position="119"/>
        <end position="139"/>
    </location>
</feature>
<feature type="transmembrane region" description="Helical" evidence="1">
    <location>
        <begin position="173"/>
        <end position="193"/>
    </location>
</feature>
<feature type="transmembrane region" description="Helical" evidence="1">
    <location>
        <begin position="214"/>
        <end position="234"/>
    </location>
</feature>
<feature type="transmembrane region" description="Helical" evidence="1">
    <location>
        <begin position="262"/>
        <end position="282"/>
    </location>
</feature>
<feature type="transmembrane region" description="Helical" evidence="1">
    <location>
        <begin position="288"/>
        <end position="308"/>
    </location>
</feature>
<feature type="transmembrane region" description="Helical" evidence="1">
    <location>
        <begin position="327"/>
        <end position="347"/>
    </location>
</feature>
<feature type="transmembrane region" description="Helical" evidence="1">
    <location>
        <begin position="361"/>
        <end position="381"/>
    </location>
</feature>
<keyword id="KW-0050">Antiport</keyword>
<keyword id="KW-1003">Cell membrane</keyword>
<keyword id="KW-0406">Ion transport</keyword>
<keyword id="KW-0472">Membrane</keyword>
<keyword id="KW-1185">Reference proteome</keyword>
<keyword id="KW-0915">Sodium</keyword>
<keyword id="KW-0739">Sodium transport</keyword>
<keyword id="KW-0812">Transmembrane</keyword>
<keyword id="KW-1133">Transmembrane helix</keyword>
<keyword id="KW-0813">Transport</keyword>
<sequence length="389" mass="41969">MSTQKKTINFLQEFSIPLILGVLIALVWANLAPENYHHFVHNEIIGHISLHFFVNDIFMVFFFAMAAIEITQSLLPGGSLNPLKRAINPLMATLGGVLGPALVFLGLNALIGSPEFARGWGIPTATDIALAWLVARVVFGAQHAAVSFLLLLAIVDDGIGLMIIAFFYPDPANPVAPLWLLLTVAGMLVAYLLRRKNVQSYWPYIILGGILSWAGLYLAHIHPALALVFIVPFLPHPPREEFGLFEDDPQDHSTLKTFEHEWKIFVDFGLLLFGLTNAGVEFSEINTLTWLVLIALVGGKTIGIFLMGSLATVIGFPFPKGMGYKELLVAGVIAAMGLTVALFVSGVAFIDPGLQGAAKMGALFSAVAAVIAFALGKVLGIKKVKDTQA</sequence>
<dbReference type="EMBL" id="AP008230">
    <property type="protein sequence ID" value="BAE84056.1"/>
    <property type="molecule type" value="Genomic_DNA"/>
</dbReference>
<dbReference type="RefSeq" id="WP_005811106.1">
    <property type="nucleotide sequence ID" value="NC_007907.1"/>
</dbReference>
<dbReference type="SMR" id="Q24V86"/>
<dbReference type="STRING" id="138119.DSY2267"/>
<dbReference type="KEGG" id="dsy:DSY2267"/>
<dbReference type="eggNOG" id="COG3004">
    <property type="taxonomic scope" value="Bacteria"/>
</dbReference>
<dbReference type="HOGENOM" id="CLU_015803_1_2_9"/>
<dbReference type="Proteomes" id="UP000001946">
    <property type="component" value="Chromosome"/>
</dbReference>
<dbReference type="GO" id="GO:0005886">
    <property type="term" value="C:plasma membrane"/>
    <property type="evidence" value="ECO:0007669"/>
    <property type="project" value="UniProtKB-SubCell"/>
</dbReference>
<dbReference type="GO" id="GO:0015385">
    <property type="term" value="F:sodium:proton antiporter activity"/>
    <property type="evidence" value="ECO:0007669"/>
    <property type="project" value="TreeGrafter"/>
</dbReference>
<dbReference type="GO" id="GO:0006885">
    <property type="term" value="P:regulation of pH"/>
    <property type="evidence" value="ECO:0007669"/>
    <property type="project" value="InterPro"/>
</dbReference>
<dbReference type="Gene3D" id="1.20.1530.10">
    <property type="entry name" value="Na+/H+ antiporter like domain"/>
    <property type="match status" value="1"/>
</dbReference>
<dbReference type="HAMAP" id="MF_01844">
    <property type="entry name" value="NhaA"/>
    <property type="match status" value="1"/>
</dbReference>
<dbReference type="InterPro" id="IPR023171">
    <property type="entry name" value="Na/H_antiporter_dom_sf"/>
</dbReference>
<dbReference type="InterPro" id="IPR004670">
    <property type="entry name" value="NhaA"/>
</dbReference>
<dbReference type="PANTHER" id="PTHR30341:SF0">
    <property type="entry name" value="NA(+)_H(+) ANTIPORTER NHAA"/>
    <property type="match status" value="1"/>
</dbReference>
<dbReference type="PANTHER" id="PTHR30341">
    <property type="entry name" value="SODIUM ION/PROTON ANTIPORTER NHAA-RELATED"/>
    <property type="match status" value="1"/>
</dbReference>
<dbReference type="Pfam" id="PF06965">
    <property type="entry name" value="Na_H_antiport_1"/>
    <property type="match status" value="1"/>
</dbReference>
<protein>
    <recommendedName>
        <fullName evidence="1">Na(+)/H(+) antiporter NhaA</fullName>
    </recommendedName>
    <alternativeName>
        <fullName evidence="1">Sodium/proton antiporter NhaA</fullName>
    </alternativeName>
</protein>
<reference key="1">
    <citation type="journal article" date="2006" name="J. Bacteriol.">
        <title>Complete genome sequence of the dehalorespiring bacterium Desulfitobacterium hafniense Y51 and comparison with Dehalococcoides ethenogenes 195.</title>
        <authorList>
            <person name="Nonaka H."/>
            <person name="Keresztes G."/>
            <person name="Shinoda Y."/>
            <person name="Ikenaga Y."/>
            <person name="Abe M."/>
            <person name="Naito K."/>
            <person name="Inatomi K."/>
            <person name="Furukawa K."/>
            <person name="Inui M."/>
            <person name="Yukawa H."/>
        </authorList>
    </citation>
    <scope>NUCLEOTIDE SEQUENCE [LARGE SCALE GENOMIC DNA]</scope>
    <source>
        <strain>Y51</strain>
    </source>
</reference>
<name>NHAA_DESHY</name>
<accession>Q24V86</accession>
<organism>
    <name type="scientific">Desulfitobacterium hafniense (strain Y51)</name>
    <dbReference type="NCBI Taxonomy" id="138119"/>
    <lineage>
        <taxon>Bacteria</taxon>
        <taxon>Bacillati</taxon>
        <taxon>Bacillota</taxon>
        <taxon>Clostridia</taxon>
        <taxon>Eubacteriales</taxon>
        <taxon>Desulfitobacteriaceae</taxon>
        <taxon>Desulfitobacterium</taxon>
    </lineage>
</organism>
<comment type="function">
    <text evidence="1">Na(+)/H(+) antiporter that extrudes sodium in exchange for external protons.</text>
</comment>
<comment type="catalytic activity">
    <reaction evidence="1">
        <text>Na(+)(in) + 2 H(+)(out) = Na(+)(out) + 2 H(+)(in)</text>
        <dbReference type="Rhea" id="RHEA:29251"/>
        <dbReference type="ChEBI" id="CHEBI:15378"/>
        <dbReference type="ChEBI" id="CHEBI:29101"/>
    </reaction>
    <physiologicalReaction direction="left-to-right" evidence="1">
        <dbReference type="Rhea" id="RHEA:29252"/>
    </physiologicalReaction>
</comment>
<comment type="subcellular location">
    <subcellularLocation>
        <location evidence="1">Cell membrane</location>
        <topology evidence="1">Multi-pass membrane protein</topology>
    </subcellularLocation>
</comment>
<comment type="similarity">
    <text evidence="1">Belongs to the NhaA Na(+)/H(+) (TC 2.A.33) antiporter family.</text>
</comment>